<gene>
    <name evidence="1" type="primary">rimM</name>
    <name type="ordered locus">EAT1b_2894</name>
</gene>
<comment type="function">
    <text evidence="1">An accessory protein needed during the final step in the assembly of 30S ribosomal subunit, possibly for assembly of the head region. Essential for efficient processing of 16S rRNA. May be needed both before and after RbfA during the maturation of 16S rRNA. It has affinity for free ribosomal 30S subunits but not for 70S ribosomes.</text>
</comment>
<comment type="subunit">
    <text evidence="1">Binds ribosomal protein uS19.</text>
</comment>
<comment type="subcellular location">
    <subcellularLocation>
        <location evidence="1">Cytoplasm</location>
    </subcellularLocation>
</comment>
<comment type="domain">
    <text evidence="1">The PRC barrel domain binds ribosomal protein uS19.</text>
</comment>
<comment type="similarity">
    <text evidence="1">Belongs to the RimM family.</text>
</comment>
<feature type="chain" id="PRO_1000201806" description="Ribosome maturation factor RimM">
    <location>
        <begin position="1"/>
        <end position="172"/>
    </location>
</feature>
<feature type="domain" description="PRC barrel" evidence="1">
    <location>
        <begin position="93"/>
        <end position="167"/>
    </location>
</feature>
<accession>C4L602</accession>
<proteinExistence type="inferred from homology"/>
<sequence length="172" mass="19603">MDWLYVGKIANTHGLKGEVKILAATDFPEERFKKGNTLFLDVDGTKQEMTITTYRPHKQFHLVTFKGFDNINLIEKYKGLKLYVHAEHVHDLDEHEFYYHEIIGCEAVVDGEVIGVVDDIFETNGANDVWVIKRPGKSDALIPYIESVVQEIDVDAKRVVITPIPGMIDDED</sequence>
<evidence type="ECO:0000255" key="1">
    <source>
        <dbReference type="HAMAP-Rule" id="MF_00014"/>
    </source>
</evidence>
<name>RIMM_EXISA</name>
<organism>
    <name type="scientific">Exiguobacterium sp. (strain ATCC BAA-1283 / AT1b)</name>
    <dbReference type="NCBI Taxonomy" id="360911"/>
    <lineage>
        <taxon>Bacteria</taxon>
        <taxon>Bacillati</taxon>
        <taxon>Bacillota</taxon>
        <taxon>Bacilli</taxon>
        <taxon>Bacillales</taxon>
        <taxon>Bacillales Family XII. Incertae Sedis</taxon>
        <taxon>Exiguobacterium</taxon>
    </lineage>
</organism>
<keyword id="KW-0143">Chaperone</keyword>
<keyword id="KW-0963">Cytoplasm</keyword>
<keyword id="KW-0690">Ribosome biogenesis</keyword>
<keyword id="KW-0698">rRNA processing</keyword>
<dbReference type="EMBL" id="CP001615">
    <property type="protein sequence ID" value="ACQ71808.1"/>
    <property type="molecule type" value="Genomic_DNA"/>
</dbReference>
<dbReference type="RefSeq" id="WP_015881367.1">
    <property type="nucleotide sequence ID" value="NC_012673.1"/>
</dbReference>
<dbReference type="SMR" id="C4L602"/>
<dbReference type="STRING" id="360911.EAT1b_2894"/>
<dbReference type="KEGG" id="eat:EAT1b_2894"/>
<dbReference type="eggNOG" id="COG0806">
    <property type="taxonomic scope" value="Bacteria"/>
</dbReference>
<dbReference type="HOGENOM" id="CLU_077636_3_1_9"/>
<dbReference type="OrthoDB" id="9810331at2"/>
<dbReference type="Proteomes" id="UP000000716">
    <property type="component" value="Chromosome"/>
</dbReference>
<dbReference type="GO" id="GO:0005737">
    <property type="term" value="C:cytoplasm"/>
    <property type="evidence" value="ECO:0007669"/>
    <property type="project" value="UniProtKB-SubCell"/>
</dbReference>
<dbReference type="GO" id="GO:0005840">
    <property type="term" value="C:ribosome"/>
    <property type="evidence" value="ECO:0007669"/>
    <property type="project" value="InterPro"/>
</dbReference>
<dbReference type="GO" id="GO:0043022">
    <property type="term" value="F:ribosome binding"/>
    <property type="evidence" value="ECO:0007669"/>
    <property type="project" value="InterPro"/>
</dbReference>
<dbReference type="GO" id="GO:0042274">
    <property type="term" value="P:ribosomal small subunit biogenesis"/>
    <property type="evidence" value="ECO:0007669"/>
    <property type="project" value="UniProtKB-UniRule"/>
</dbReference>
<dbReference type="GO" id="GO:0006364">
    <property type="term" value="P:rRNA processing"/>
    <property type="evidence" value="ECO:0007669"/>
    <property type="project" value="UniProtKB-UniRule"/>
</dbReference>
<dbReference type="Gene3D" id="2.30.30.240">
    <property type="entry name" value="PRC-barrel domain"/>
    <property type="match status" value="1"/>
</dbReference>
<dbReference type="Gene3D" id="2.40.30.60">
    <property type="entry name" value="RimM"/>
    <property type="match status" value="1"/>
</dbReference>
<dbReference type="HAMAP" id="MF_00014">
    <property type="entry name" value="Ribosome_mat_RimM"/>
    <property type="match status" value="1"/>
</dbReference>
<dbReference type="InterPro" id="IPR011033">
    <property type="entry name" value="PRC_barrel-like_sf"/>
</dbReference>
<dbReference type="InterPro" id="IPR056792">
    <property type="entry name" value="PRC_RimM"/>
</dbReference>
<dbReference type="InterPro" id="IPR011961">
    <property type="entry name" value="RimM"/>
</dbReference>
<dbReference type="InterPro" id="IPR002676">
    <property type="entry name" value="RimM_N"/>
</dbReference>
<dbReference type="InterPro" id="IPR036976">
    <property type="entry name" value="RimM_N_sf"/>
</dbReference>
<dbReference type="InterPro" id="IPR009000">
    <property type="entry name" value="Transl_B-barrel_sf"/>
</dbReference>
<dbReference type="NCBIfam" id="TIGR02273">
    <property type="entry name" value="16S_RimM"/>
    <property type="match status" value="1"/>
</dbReference>
<dbReference type="PANTHER" id="PTHR33692">
    <property type="entry name" value="RIBOSOME MATURATION FACTOR RIMM"/>
    <property type="match status" value="1"/>
</dbReference>
<dbReference type="PANTHER" id="PTHR33692:SF1">
    <property type="entry name" value="RIBOSOME MATURATION FACTOR RIMM"/>
    <property type="match status" value="1"/>
</dbReference>
<dbReference type="Pfam" id="PF24986">
    <property type="entry name" value="PRC_RimM"/>
    <property type="match status" value="1"/>
</dbReference>
<dbReference type="Pfam" id="PF01782">
    <property type="entry name" value="RimM"/>
    <property type="match status" value="1"/>
</dbReference>
<dbReference type="SUPFAM" id="SSF50346">
    <property type="entry name" value="PRC-barrel domain"/>
    <property type="match status" value="1"/>
</dbReference>
<dbReference type="SUPFAM" id="SSF50447">
    <property type="entry name" value="Translation proteins"/>
    <property type="match status" value="1"/>
</dbReference>
<protein>
    <recommendedName>
        <fullName evidence="1">Ribosome maturation factor RimM</fullName>
    </recommendedName>
</protein>
<reference key="1">
    <citation type="journal article" date="2011" name="J. Bacteriol.">
        <title>Complete genome sequence of the Thermophilic Bacterium Exiguobacterium sp. AT1b.</title>
        <authorList>
            <person name="Vishnivetskaya T.A."/>
            <person name="Lucas S."/>
            <person name="Copeland A."/>
            <person name="Lapidus A."/>
            <person name="Glavina del Rio T."/>
            <person name="Dalin E."/>
            <person name="Tice H."/>
            <person name="Bruce D.C."/>
            <person name="Goodwin L.A."/>
            <person name="Pitluck S."/>
            <person name="Saunders E."/>
            <person name="Brettin T."/>
            <person name="Detter C."/>
            <person name="Han C."/>
            <person name="Larimer F."/>
            <person name="Land M.L."/>
            <person name="Hauser L.J."/>
            <person name="Kyrpides N.C."/>
            <person name="Ovchinnikova G."/>
            <person name="Kathariou S."/>
            <person name="Ramaley R.F."/>
            <person name="Rodrigues D.F."/>
            <person name="Hendrix C."/>
            <person name="Richardson P."/>
            <person name="Tiedje J.M."/>
        </authorList>
    </citation>
    <scope>NUCLEOTIDE SEQUENCE [LARGE SCALE GENOMIC DNA]</scope>
    <source>
        <strain>ATCC BAA-1283 / AT1b</strain>
    </source>
</reference>